<proteinExistence type="evidence at protein level"/>
<evidence type="ECO:0000250" key="1">
    <source>
        <dbReference type="UniProtKB" id="P31658"/>
    </source>
</evidence>
<evidence type="ECO:0000255" key="2">
    <source>
        <dbReference type="PROSITE-ProRule" id="PRU00608"/>
    </source>
</evidence>
<evidence type="ECO:0000269" key="3">
    <source>
    </source>
</evidence>
<evidence type="ECO:0000269" key="4">
    <source>
    </source>
</evidence>
<evidence type="ECO:0000269" key="5">
    <source>
    </source>
</evidence>
<evidence type="ECO:0000269" key="6">
    <source>
    </source>
</evidence>
<evidence type="ECO:0000269" key="7">
    <source>
    </source>
</evidence>
<evidence type="ECO:0000269" key="8">
    <source>
    </source>
</evidence>
<evidence type="ECO:0000303" key="9">
    <source>
    </source>
</evidence>
<evidence type="ECO:0000305" key="10"/>
<evidence type="ECO:0000305" key="11">
    <source>
    </source>
</evidence>
<evidence type="ECO:0000305" key="12">
    <source>
    </source>
</evidence>
<evidence type="ECO:0000305" key="13">
    <source>
    </source>
</evidence>
<evidence type="ECO:0007829" key="14">
    <source>
        <dbReference type="PDB" id="1OI4"/>
    </source>
</evidence>
<accession>P45470</accession>
<accession>Q2M957</accession>
<reference key="1">
    <citation type="journal article" date="1997" name="Science">
        <title>The complete genome sequence of Escherichia coli K-12.</title>
        <authorList>
            <person name="Blattner F.R."/>
            <person name="Plunkett G. III"/>
            <person name="Bloch C.A."/>
            <person name="Perna N.T."/>
            <person name="Burland V."/>
            <person name="Riley M."/>
            <person name="Collado-Vides J."/>
            <person name="Glasner J.D."/>
            <person name="Rode C.K."/>
            <person name="Mayhew G.F."/>
            <person name="Gregor J."/>
            <person name="Davis N.W."/>
            <person name="Kirkpatrick H.A."/>
            <person name="Goeden M.A."/>
            <person name="Rose D.J."/>
            <person name="Mau B."/>
            <person name="Shao Y."/>
        </authorList>
    </citation>
    <scope>NUCLEOTIDE SEQUENCE [LARGE SCALE GENOMIC DNA]</scope>
    <source>
        <strain>K12 / MG1655 / ATCC 47076</strain>
    </source>
</reference>
<reference key="2">
    <citation type="journal article" date="2006" name="Mol. Syst. Biol.">
        <title>Highly accurate genome sequences of Escherichia coli K-12 strains MG1655 and W3110.</title>
        <authorList>
            <person name="Hayashi K."/>
            <person name="Morooka N."/>
            <person name="Yamamoto Y."/>
            <person name="Fujita K."/>
            <person name="Isono K."/>
            <person name="Choi S."/>
            <person name="Ohtsubo E."/>
            <person name="Baba T."/>
            <person name="Wanner B.L."/>
            <person name="Mori H."/>
            <person name="Horiuchi T."/>
        </authorList>
    </citation>
    <scope>NUCLEOTIDE SEQUENCE [LARGE SCALE GENOMIC DNA]</scope>
    <source>
        <strain>K12 / W3110 / ATCC 27325 / DSM 5911</strain>
    </source>
</reference>
<reference key="3">
    <citation type="journal article" date="2006" name="Protein Expr. Purif.">
        <title>Cloning, expression, and purification of the general stress protein YhbO from Escherichia coli.</title>
        <authorList>
            <person name="Abdallah J."/>
            <person name="Kern R."/>
            <person name="Malki A."/>
            <person name="Eckey V."/>
            <person name="Richarme G."/>
        </authorList>
    </citation>
    <scope>PROTEIN SEQUENCE OF 2-9</scope>
    <scope>SUBUNIT</scope>
    <scope>SUBCELLULAR LOCATION</scope>
    <source>
        <strain>K12 / MG1655 / ATCC 47076</strain>
    </source>
</reference>
<reference key="4">
    <citation type="journal article" date="2007" name="J. Bacteriol.">
        <title>YhbO protects cells against multiple stresses.</title>
        <authorList>
            <person name="Abdallah J."/>
            <person name="Caldas T."/>
            <person name="Kthiri F."/>
            <person name="Kern R."/>
            <person name="Richarme G."/>
        </authorList>
    </citation>
    <scope>FUNCTION IN STRESS RESISTANCE</scope>
    <scope>DISRUPTION PHENOTYPE</scope>
    <scope>MUTAGENESIS OF CYS-104</scope>
</reference>
<reference key="5">
    <citation type="journal article" date="2016" name="Biochem. Biophys. Res. Commun.">
        <title>The DJ-1 superfamily members YhbO and YajL from Escherichia coli repair proteins from glycation by methylglyoxal and glyoxal.</title>
        <authorList>
            <person name="Abdallah J."/>
            <person name="Mihoub M."/>
            <person name="Gautier V."/>
            <person name="Richarme G."/>
        </authorList>
    </citation>
    <scope>FUNCTION AS A PROTEIN DEGLYCASE</scope>
    <scope>CATALYTIC ACTIVITY</scope>
    <scope>BIOPHYSICOCHEMICAL PROPERTIES</scope>
    <scope>DISRUPTION PHENOTYPE</scope>
    <source>
        <strain>K12 / MG1655 / ATCC 47076</strain>
    </source>
</reference>
<reference key="6">
    <citation type="journal article" date="2016" name="Biochem. Biophys. Res. Commun.">
        <title>DJ-1 family Maillard deglycases prevent acrylamide formation.</title>
        <authorList>
            <person name="Richarme G."/>
            <person name="Marguet E."/>
            <person name="Forterre P."/>
            <person name="Ishino S."/>
            <person name="Ishino Y."/>
        </authorList>
    </citation>
    <scope>FUNCTION</scope>
</reference>
<reference key="7">
    <citation type="journal article" date="2016" name="FEMS Microbiol. Lett.">
        <title>Characterization of the Escherichia coli YajL, YhbO and ElbB glyoxalases.</title>
        <authorList>
            <person name="Lee C."/>
            <person name="Lee J."/>
            <person name="Lee J.Y."/>
            <person name="Park C."/>
        </authorList>
    </citation>
    <scope>FUNCTION AS A GLYOXALASE</scope>
    <scope>BIOPHYSICOCHEMICAL PROPERTIES</scope>
    <scope>ACTIVITY REGULATION</scope>
    <source>
        <strain>K12 / MG1655 / ATCC 47076</strain>
    </source>
</reference>
<reference key="8">
    <citation type="journal article" date="2017" name="Science">
        <title>Guanine glycation repair by DJ-1/Park7 and its bacterial homologs.</title>
        <authorList>
            <person name="Richarme G."/>
            <person name="Liu C."/>
            <person name="Mihoub M."/>
            <person name="Abdallah J."/>
            <person name="Leger T."/>
            <person name="Joly N."/>
            <person name="Liebart J.C."/>
            <person name="Jurkunas U.V."/>
            <person name="Nadal M."/>
            <person name="Bouloc P."/>
            <person name="Dairou J."/>
            <person name="Lamouri A."/>
        </authorList>
    </citation>
    <scope>FUNCTION AS A NUCLEOTIDE DEGLYCASE</scope>
    <scope>CATALYTIC ACTIVITY</scope>
    <scope>DISRUPTION PHENOTYPE</scope>
    <source>
        <strain>K12 / BW25113</strain>
    </source>
</reference>
<reference key="9">
    <citation type="journal article" date="2003" name="J. Struct. Funct. Genomics">
        <title>Structural genomics of highly conserved microbial genes of unknown function in search of new antibacterial targets.</title>
        <authorList>
            <person name="Abergel C."/>
            <person name="Coutard B."/>
            <person name="Byrne D."/>
            <person name="Chenivesse S."/>
            <person name="Claude J.-B."/>
            <person name="Deregnaucourt C."/>
            <person name="Fricaux T."/>
            <person name="Gianesini-Boutreux C."/>
            <person name="Jeudy S."/>
            <person name="Lebrun R."/>
            <person name="Maza C."/>
            <person name="Notredame C."/>
            <person name="Poirot O."/>
            <person name="Suhre K."/>
            <person name="Varagnol M."/>
            <person name="Claverie J.-M."/>
        </authorList>
    </citation>
    <scope>X-RAY CRYSTALLOGRAPHY (2.03 ANGSTROMS) OF 2-172</scope>
</reference>
<comment type="function">
    <text evidence="4 5 6 7 8">Protein and nucleotide deglycase that catalyzes the deglycation of the Maillard adducts formed between amino groups of proteins or nucleotides and reactive carbonyl groups of glyoxals (PubMed:26774339, PubMed:28596309). Thus, functions as a protein deglycase that repairs methylglyoxal- and glyoxal-glycated proteins, and releases repaired proteins and lactate or glycolate, respectively. Deglycates cysteine, arginine and lysine residues in proteins, and thus reactivates these proteins by reversing glycation by glyoxals. Is able to repair glycated serum albumin, collagen, glyceraldehyde-3-phosphate dehydrogenase, and fructose biphosphate aldolase. Acts on early glycation intermediates (hemithioacetals and aminocarbinols), preventing the formation of advanced glycation endproducts (AGE) that cause irreversible damage (PubMed:26774339). Also functions as a nucleotide deglycase able to repair glycated guanine in the free nucleotide pool (GTP, GDP, GMP, dGTP) and in DNA and RNA. Is thus involved in a major nucleotide repair system named guanine glycation repair (GG repair), dedicated to reversing methylglyoxal and glyoxal damage via nucleotide sanitization and direct nucleic acid repair (PubMed:28596309). In vitro, prevents acrylamide formation in asparagine/glyoxal and asparagine/sugar mixtures at 55 degrees Celsius, likely by degrading asparagine/glyoxal Maillard adducts formed at high temperatures (PubMed:27530919). Also displays an apparent glyoxalase activity that in fact reflects its deglycase activity (PubMed:26678554, PubMed:26774339). Is a general stress protein; is required for the protection of bacterial cells against many environmental stresses, including oxidative, thermal, osmotic, UV, and pH stresses (PubMed:17933887). And plays an important role in protection against electrophile/carbonyl stress (PubMed:26774339).</text>
</comment>
<comment type="catalytic activity">
    <reaction evidence="12">
        <text>N(omega)-(1-hydroxy-2-oxopropyl)-L-arginyl-[protein] + H2O = lactate + L-arginyl-[protein] + H(+)</text>
        <dbReference type="Rhea" id="RHEA:49548"/>
        <dbReference type="Rhea" id="RHEA-COMP:10532"/>
        <dbReference type="Rhea" id="RHEA-COMP:12428"/>
        <dbReference type="ChEBI" id="CHEBI:15377"/>
        <dbReference type="ChEBI" id="CHEBI:15378"/>
        <dbReference type="ChEBI" id="CHEBI:24996"/>
        <dbReference type="ChEBI" id="CHEBI:29965"/>
        <dbReference type="ChEBI" id="CHEBI:131708"/>
        <dbReference type="EC" id="3.5.1.124"/>
    </reaction>
</comment>
<comment type="catalytic activity">
    <reaction evidence="6">
        <text>N(6)-(1-hydroxy-2-oxopropyl)-L-lysyl-[protein] + H2O = lactate + L-lysyl-[protein] + H(+)</text>
        <dbReference type="Rhea" id="RHEA:49552"/>
        <dbReference type="Rhea" id="RHEA-COMP:9752"/>
        <dbReference type="Rhea" id="RHEA-COMP:12429"/>
        <dbReference type="ChEBI" id="CHEBI:15377"/>
        <dbReference type="ChEBI" id="CHEBI:15378"/>
        <dbReference type="ChEBI" id="CHEBI:24996"/>
        <dbReference type="ChEBI" id="CHEBI:29969"/>
        <dbReference type="ChEBI" id="CHEBI:131709"/>
        <dbReference type="EC" id="3.5.1.124"/>
    </reaction>
</comment>
<comment type="catalytic activity">
    <reaction evidence="6">
        <text>S-(1-hydroxy-2-oxopropyl)-L-cysteinyl-[protein] + H2O = lactate + L-cysteinyl-[protein] + H(+)</text>
        <dbReference type="Rhea" id="RHEA:49556"/>
        <dbReference type="Rhea" id="RHEA-COMP:10131"/>
        <dbReference type="Rhea" id="RHEA-COMP:12430"/>
        <dbReference type="ChEBI" id="CHEBI:15377"/>
        <dbReference type="ChEBI" id="CHEBI:15378"/>
        <dbReference type="ChEBI" id="CHEBI:24996"/>
        <dbReference type="ChEBI" id="CHEBI:29950"/>
        <dbReference type="ChEBI" id="CHEBI:131710"/>
        <dbReference type="EC" id="3.5.1.124"/>
    </reaction>
</comment>
<comment type="catalytic activity">
    <reaction evidence="6">
        <text>N(omega)-(1-hydroxy-2-oxoethyl)-L-arginyl-[protein] + H2O = L-arginyl-[protein] + glycolate + H(+)</text>
        <dbReference type="Rhea" id="RHEA:57188"/>
        <dbReference type="Rhea" id="RHEA-COMP:10532"/>
        <dbReference type="Rhea" id="RHEA-COMP:14844"/>
        <dbReference type="ChEBI" id="CHEBI:15377"/>
        <dbReference type="ChEBI" id="CHEBI:15378"/>
        <dbReference type="ChEBI" id="CHEBI:29805"/>
        <dbReference type="ChEBI" id="CHEBI:29965"/>
        <dbReference type="ChEBI" id="CHEBI:141553"/>
        <dbReference type="EC" id="3.5.1.124"/>
    </reaction>
</comment>
<comment type="catalytic activity">
    <reaction evidence="6">
        <text>N(6)-(1-hydroxy-2-oxoethyl)-L-lysyl-[protein] + H2O = glycolate + L-lysyl-[protein] + H(+)</text>
        <dbReference type="Rhea" id="RHEA:57192"/>
        <dbReference type="Rhea" id="RHEA-COMP:9752"/>
        <dbReference type="Rhea" id="RHEA-COMP:14845"/>
        <dbReference type="ChEBI" id="CHEBI:15377"/>
        <dbReference type="ChEBI" id="CHEBI:15378"/>
        <dbReference type="ChEBI" id="CHEBI:29805"/>
        <dbReference type="ChEBI" id="CHEBI:29969"/>
        <dbReference type="ChEBI" id="CHEBI:141554"/>
        <dbReference type="EC" id="3.5.1.124"/>
    </reaction>
</comment>
<comment type="catalytic activity">
    <reaction evidence="12">
        <text>S-(1-hydroxy-2-oxoethyl)-L-cysteinyl-[protein] + H2O = glycolate + L-cysteinyl-[protein] + H(+)</text>
        <dbReference type="Rhea" id="RHEA:57196"/>
        <dbReference type="Rhea" id="RHEA-COMP:10131"/>
        <dbReference type="Rhea" id="RHEA-COMP:14846"/>
        <dbReference type="ChEBI" id="CHEBI:15377"/>
        <dbReference type="ChEBI" id="CHEBI:15378"/>
        <dbReference type="ChEBI" id="CHEBI:29805"/>
        <dbReference type="ChEBI" id="CHEBI:29950"/>
        <dbReference type="ChEBI" id="CHEBI:141555"/>
        <dbReference type="EC" id="3.5.1.124"/>
    </reaction>
</comment>
<comment type="catalytic activity">
    <reaction evidence="13">
        <text>N(2)-(1-hydroxy-2-oxopropyl)-dGTP + H2O = lactate + dGTP + H(+)</text>
        <dbReference type="Rhea" id="RHEA:57244"/>
        <dbReference type="ChEBI" id="CHEBI:15377"/>
        <dbReference type="ChEBI" id="CHEBI:15378"/>
        <dbReference type="ChEBI" id="CHEBI:24996"/>
        <dbReference type="ChEBI" id="CHEBI:61429"/>
        <dbReference type="ChEBI" id="CHEBI:141569"/>
    </reaction>
</comment>
<comment type="catalytic activity">
    <reaction evidence="8">
        <text>N(2)-(1-hydroxy-2-oxopropyl)-GTP + H2O = lactate + GTP + H(+)</text>
        <dbReference type="Rhea" id="RHEA:57256"/>
        <dbReference type="ChEBI" id="CHEBI:15377"/>
        <dbReference type="ChEBI" id="CHEBI:15378"/>
        <dbReference type="ChEBI" id="CHEBI:24996"/>
        <dbReference type="ChEBI" id="CHEBI:37565"/>
        <dbReference type="ChEBI" id="CHEBI:141570"/>
    </reaction>
</comment>
<comment type="catalytic activity">
    <reaction evidence="13">
        <text>N(2)-(1-hydroxy-2-oxopropyl)-GDP + H2O = lactate + GDP + H(+)</text>
        <dbReference type="Rhea" id="RHEA:57260"/>
        <dbReference type="ChEBI" id="CHEBI:15377"/>
        <dbReference type="ChEBI" id="CHEBI:15378"/>
        <dbReference type="ChEBI" id="CHEBI:24996"/>
        <dbReference type="ChEBI" id="CHEBI:58189"/>
        <dbReference type="ChEBI" id="CHEBI:141573"/>
    </reaction>
</comment>
<comment type="catalytic activity">
    <reaction evidence="13">
        <text>N(2)-(1-hydroxy-2-oxopropyl)-GMP + H2O = lactate + GMP + H(+)</text>
        <dbReference type="Rhea" id="RHEA:57268"/>
        <dbReference type="ChEBI" id="CHEBI:15377"/>
        <dbReference type="ChEBI" id="CHEBI:15378"/>
        <dbReference type="ChEBI" id="CHEBI:24996"/>
        <dbReference type="ChEBI" id="CHEBI:58115"/>
        <dbReference type="ChEBI" id="CHEBI:141575"/>
    </reaction>
</comment>
<comment type="catalytic activity">
    <reaction evidence="13">
        <text>N(2)-(1-hydroxy-2-oxoethyl)-dGTP + H2O = dGTP + glycolate + H(+)</text>
        <dbReference type="Rhea" id="RHEA:57248"/>
        <dbReference type="ChEBI" id="CHEBI:15377"/>
        <dbReference type="ChEBI" id="CHEBI:15378"/>
        <dbReference type="ChEBI" id="CHEBI:29805"/>
        <dbReference type="ChEBI" id="CHEBI:61429"/>
        <dbReference type="ChEBI" id="CHEBI:141572"/>
    </reaction>
</comment>
<comment type="catalytic activity">
    <reaction evidence="13">
        <text>N(2)-(1-hydroxy-2-oxoethyl)-GTP + H2O = glycolate + GTP + H(+)</text>
        <dbReference type="Rhea" id="RHEA:57252"/>
        <dbReference type="ChEBI" id="CHEBI:15377"/>
        <dbReference type="ChEBI" id="CHEBI:15378"/>
        <dbReference type="ChEBI" id="CHEBI:29805"/>
        <dbReference type="ChEBI" id="CHEBI:37565"/>
        <dbReference type="ChEBI" id="CHEBI:141571"/>
    </reaction>
</comment>
<comment type="catalytic activity">
    <reaction evidence="13">
        <text>N(2)-(1-hydroxy-2-oxoethyl)-GDP + H2O = glycolate + GDP + H(+)</text>
        <dbReference type="Rhea" id="RHEA:57264"/>
        <dbReference type="ChEBI" id="CHEBI:15377"/>
        <dbReference type="ChEBI" id="CHEBI:15378"/>
        <dbReference type="ChEBI" id="CHEBI:29805"/>
        <dbReference type="ChEBI" id="CHEBI:58189"/>
        <dbReference type="ChEBI" id="CHEBI:141574"/>
    </reaction>
</comment>
<comment type="catalytic activity">
    <reaction evidence="13">
        <text>N(2)-(1-hydroxy-2-oxoethyl)-GMP + H2O = glycolate + GMP + H(+)</text>
        <dbReference type="Rhea" id="RHEA:57304"/>
        <dbReference type="ChEBI" id="CHEBI:15377"/>
        <dbReference type="ChEBI" id="CHEBI:15378"/>
        <dbReference type="ChEBI" id="CHEBI:29805"/>
        <dbReference type="ChEBI" id="CHEBI:58115"/>
        <dbReference type="ChEBI" id="CHEBI:141576"/>
    </reaction>
</comment>
<comment type="catalytic activity">
    <reaction evidence="13">
        <text>an N(2)-(1-hydroxy-2-oxopropyl)-guanosine in RNA + H2O = a guanosine in RNA + lactate + H(+)</text>
        <dbReference type="Rhea" id="RHEA:57288"/>
        <dbReference type="Rhea" id="RHEA-COMP:14855"/>
        <dbReference type="Rhea" id="RHEA-COMP:14858"/>
        <dbReference type="ChEBI" id="CHEBI:15377"/>
        <dbReference type="ChEBI" id="CHEBI:15378"/>
        <dbReference type="ChEBI" id="CHEBI:24996"/>
        <dbReference type="ChEBI" id="CHEBI:74269"/>
        <dbReference type="ChEBI" id="CHEBI:141580"/>
    </reaction>
</comment>
<comment type="catalytic activity">
    <reaction evidence="13">
        <text>an N(2)-(1-hydroxy-2-oxopropyl)-2'-deoxyguanosine in DNA + H2O = a 2'-deoxyguanosine in DNA + lactate + H(+)</text>
        <dbReference type="Rhea" id="RHEA:57300"/>
        <dbReference type="Rhea" id="RHEA-COMP:11367"/>
        <dbReference type="Rhea" id="RHEA-COMP:14856"/>
        <dbReference type="ChEBI" id="CHEBI:15377"/>
        <dbReference type="ChEBI" id="CHEBI:15378"/>
        <dbReference type="ChEBI" id="CHEBI:24996"/>
        <dbReference type="ChEBI" id="CHEBI:85445"/>
        <dbReference type="ChEBI" id="CHEBI:141578"/>
    </reaction>
</comment>
<comment type="catalytic activity">
    <reaction evidence="13">
        <text>an N(2)-(1-hydroxy-2-oxoethyl)-guanosine in RNA + H2O = a guanosine in RNA + glycolate + H(+)</text>
        <dbReference type="Rhea" id="RHEA:57292"/>
        <dbReference type="Rhea" id="RHEA-COMP:14855"/>
        <dbReference type="Rhea" id="RHEA-COMP:14859"/>
        <dbReference type="ChEBI" id="CHEBI:15377"/>
        <dbReference type="ChEBI" id="CHEBI:15378"/>
        <dbReference type="ChEBI" id="CHEBI:29805"/>
        <dbReference type="ChEBI" id="CHEBI:74269"/>
        <dbReference type="ChEBI" id="CHEBI:141581"/>
    </reaction>
</comment>
<comment type="catalytic activity">
    <reaction evidence="13">
        <text>an N(2)-(1-hydroxy-2-oxoethyl)-2'-deoxyguanosine in DNA + H2O = a 2'-deoxyguanosine in DNA + glycolate + H(+)</text>
        <dbReference type="Rhea" id="RHEA:57296"/>
        <dbReference type="Rhea" id="RHEA-COMP:11367"/>
        <dbReference type="Rhea" id="RHEA-COMP:14857"/>
        <dbReference type="ChEBI" id="CHEBI:15377"/>
        <dbReference type="ChEBI" id="CHEBI:15378"/>
        <dbReference type="ChEBI" id="CHEBI:29805"/>
        <dbReference type="ChEBI" id="CHEBI:85445"/>
        <dbReference type="ChEBI" id="CHEBI:141579"/>
    </reaction>
</comment>
<comment type="activity regulation">
    <text evidence="5">Glyoxalase activity is inhibited by zinc ions at pH 7.0.</text>
</comment>
<comment type="biophysicochemical properties">
    <kinetics>
        <KM evidence="5">0.38 mM for glyoxal (at pH 7.4 and 37 degrees Celsius)</KM>
        <KM evidence="5">0.06 mM for methylglyoxal (at pH 7.4 and 37 degrees Celsius)</KM>
        <text evidence="5 6">kcat is 118.44 min(-1) and 20.80 min(-1) for glyoxalase activity with glyoxal (GO) and methylglyoxal (MGO) as substrate, respectively (at pH 7.4 and 37 degrees Celsius) (PubMed:26678554). The apparent kcat of MGO and GO degradation is 0.29 sec(-1), and 0.42 sec(-1), respectively (at 22 degrees Celsius) (PubMed:26774339).</text>
    </kinetics>
</comment>
<comment type="subunit">
    <text evidence="3">Exists in monomeric, trimeric, and hexameric forms.</text>
</comment>
<comment type="subcellular location">
    <subcellularLocation>
        <location evidence="11">Cytoplasm</location>
    </subcellularLocation>
</comment>
<comment type="disruption phenotype">
    <text evidence="4 6">Cells lacking this gene are highly sensitive to oxidative, thermal, UV, and pH stresses, but only slightly sensitive to salt stress and insensitive to cold stress (PubMed:17933887). They display increased protein glycation levels, and decreased viability in methylglyoxal- or glucose-containing media (PubMed:26774339). They also show highly increased DNA and RNA glycation levels, and exhibit strong mutator phenotypes (PubMed:28596309). Moreover, the double and triple mutants lacking yhbO and yajL, and yhbO, yajL and hchA, respectively, display impressive amounts of glycated proteins, suggesting that the YhbO, YajL and Hsp31 deglycases display relatively redundant functions (PubMed:26774339). The triple mutant displays higher glycation levels of free nucleotides (GTP and dGTP) than the parental strain, and shows higher glycation levels of DNA and RNA than those of single mutants (PubMed:28596309).</text>
</comment>
<comment type="similarity">
    <text evidence="10">Belongs to the peptidase C56 family.</text>
</comment>
<comment type="caution">
    <text evidence="10">The protein deglycation activity has been ascribed to a TRIS buffer artifact by a publication (PubMed:27903648), which has then been rebutted by clear biochemical experiments showing that DJ-1 family deglycases are bona fide deglycases (PubMed:28013050). Deglycase activity is even strengthened by a novel article that reports nucleotide deglycation activity (PubMed:28596309).</text>
</comment>
<comment type="sequence caution" evidence="10">
    <conflict type="erroneous initiation">
        <sequence resource="EMBL-CDS" id="AAA57956"/>
    </conflict>
    <text>Extended N-terminus.</text>
</comment>
<gene>
    <name type="primary">yhbO</name>
    <name type="ordered locus">b3153</name>
    <name type="ordered locus">JW5529</name>
</gene>
<organism>
    <name type="scientific">Escherichia coli (strain K12)</name>
    <dbReference type="NCBI Taxonomy" id="83333"/>
    <lineage>
        <taxon>Bacteria</taxon>
        <taxon>Pseudomonadati</taxon>
        <taxon>Pseudomonadota</taxon>
        <taxon>Gammaproteobacteria</taxon>
        <taxon>Enterobacterales</taxon>
        <taxon>Enterobacteriaceae</taxon>
        <taxon>Escherichia</taxon>
    </lineage>
</organism>
<keyword id="KW-0002">3D-structure</keyword>
<keyword id="KW-0963">Cytoplasm</keyword>
<keyword id="KW-0903">Direct protein sequencing</keyword>
<keyword id="KW-0227">DNA damage</keyword>
<keyword id="KW-0234">DNA repair</keyword>
<keyword id="KW-0378">Hydrolase</keyword>
<keyword id="KW-1185">Reference proteome</keyword>
<keyword id="KW-0346">Stress response</keyword>
<sequence>MSKKIAVLITDEFEDSEFTSPADEFRKAGHEVITIEKQAGKTVKGKKGEASVTIDKSIDEVTPAEFDALLLPGGHSPDYLRGDNRFVTFTRDFVNSGKPVFAICHGPQLLISADVIRGRKLTAVKPIIIDVKNAGAEFYDQEVVVDKDQLVTSRTPDDLPAFNREALRLLGA</sequence>
<feature type="initiator methionine" description="Removed" evidence="3">
    <location>
        <position position="1"/>
    </location>
</feature>
<feature type="chain" id="PRO_0000157831" description="Protein/nucleic acid deglycase 2">
    <location>
        <begin position="2"/>
        <end position="172"/>
    </location>
</feature>
<feature type="domain" description="PfpI endopeptidase" evidence="2">
    <location>
        <begin position="3"/>
        <end position="171"/>
    </location>
</feature>
<feature type="active site" description="Nucleophile" evidence="1">
    <location>
        <position position="104"/>
    </location>
</feature>
<feature type="mutagenesis site" description="Unable to complement the gene deletion mutant, in contrast to the wild-type allele that rescues the oxidative-stress and thermal-stress sensitive phenotypes." evidence="4">
    <original>C</original>
    <variation>A</variation>
    <location>
        <position position="104"/>
    </location>
</feature>
<feature type="strand" evidence="14">
    <location>
        <begin position="4"/>
        <end position="8"/>
    </location>
</feature>
<feature type="helix" evidence="14">
    <location>
        <begin position="16"/>
        <end position="27"/>
    </location>
</feature>
<feature type="strand" evidence="14">
    <location>
        <begin position="31"/>
        <end position="38"/>
    </location>
</feature>
<feature type="strand" evidence="14">
    <location>
        <begin position="42"/>
        <end position="44"/>
    </location>
</feature>
<feature type="strand" evidence="14">
    <location>
        <begin position="51"/>
        <end position="53"/>
    </location>
</feature>
<feature type="helix" evidence="14">
    <location>
        <begin position="58"/>
        <end position="60"/>
    </location>
</feature>
<feature type="helix" evidence="14">
    <location>
        <begin position="63"/>
        <end position="65"/>
    </location>
</feature>
<feature type="strand" evidence="14">
    <location>
        <begin position="67"/>
        <end position="71"/>
    </location>
</feature>
<feature type="helix" evidence="14">
    <location>
        <begin position="76"/>
        <end position="80"/>
    </location>
</feature>
<feature type="helix" evidence="14">
    <location>
        <begin position="84"/>
        <end position="95"/>
    </location>
</feature>
<feature type="strand" evidence="14">
    <location>
        <begin position="100"/>
        <end position="103"/>
    </location>
</feature>
<feature type="turn" evidence="14">
    <location>
        <begin position="104"/>
        <end position="106"/>
    </location>
</feature>
<feature type="helix" evidence="14">
    <location>
        <begin position="107"/>
        <end position="113"/>
    </location>
</feature>
<feature type="helix" evidence="14">
    <location>
        <begin position="125"/>
        <end position="127"/>
    </location>
</feature>
<feature type="helix" evidence="14">
    <location>
        <begin position="128"/>
        <end position="133"/>
    </location>
</feature>
<feature type="strand" evidence="14">
    <location>
        <begin position="144"/>
        <end position="146"/>
    </location>
</feature>
<feature type="turn" evidence="14">
    <location>
        <begin position="147"/>
        <end position="149"/>
    </location>
</feature>
<feature type="strand" evidence="14">
    <location>
        <begin position="150"/>
        <end position="155"/>
    </location>
</feature>
<feature type="helix" evidence="14">
    <location>
        <begin position="156"/>
        <end position="158"/>
    </location>
</feature>
<feature type="helix" evidence="14">
    <location>
        <begin position="159"/>
        <end position="170"/>
    </location>
</feature>
<dbReference type="EC" id="3.1.2.-" evidence="6"/>
<dbReference type="EC" id="3.5.1.-" evidence="8"/>
<dbReference type="EC" id="3.5.1.124" evidence="6"/>
<dbReference type="EMBL" id="U18997">
    <property type="protein sequence ID" value="AAA57956.1"/>
    <property type="status" value="ALT_INIT"/>
    <property type="molecule type" value="Genomic_DNA"/>
</dbReference>
<dbReference type="EMBL" id="U00096">
    <property type="protein sequence ID" value="AAC76187.2"/>
    <property type="molecule type" value="Genomic_DNA"/>
</dbReference>
<dbReference type="EMBL" id="AP009048">
    <property type="protein sequence ID" value="BAE77199.1"/>
    <property type="molecule type" value="Genomic_DNA"/>
</dbReference>
<dbReference type="RefSeq" id="NP_417622.2">
    <property type="nucleotide sequence ID" value="NC_000913.3"/>
</dbReference>
<dbReference type="RefSeq" id="WP_000037608.1">
    <property type="nucleotide sequence ID" value="NZ_STEB01000012.1"/>
</dbReference>
<dbReference type="PDB" id="1OI4">
    <property type="method" value="X-ray"/>
    <property type="resolution" value="2.03 A"/>
    <property type="chains" value="A/B=2-172"/>
</dbReference>
<dbReference type="PDBsum" id="1OI4"/>
<dbReference type="SMR" id="P45470"/>
<dbReference type="BioGRID" id="4259270">
    <property type="interactions" value="13"/>
</dbReference>
<dbReference type="DIP" id="DIP-12263N"/>
<dbReference type="FunCoup" id="P45470">
    <property type="interactions" value="396"/>
</dbReference>
<dbReference type="STRING" id="511145.b3153"/>
<dbReference type="MEROPS" id="C56.976"/>
<dbReference type="jPOST" id="P45470"/>
<dbReference type="PaxDb" id="511145-b3153"/>
<dbReference type="EnsemblBacteria" id="AAC76187">
    <property type="protein sequence ID" value="AAC76187"/>
    <property type="gene ID" value="b3153"/>
</dbReference>
<dbReference type="GeneID" id="75206008"/>
<dbReference type="GeneID" id="947666"/>
<dbReference type="KEGG" id="ecj:JW5529"/>
<dbReference type="KEGG" id="eco:b3153"/>
<dbReference type="KEGG" id="ecoc:C3026_17175"/>
<dbReference type="PATRIC" id="fig|1411691.4.peg.3577"/>
<dbReference type="EchoBASE" id="EB2637"/>
<dbReference type="eggNOG" id="COG0693">
    <property type="taxonomic scope" value="Bacteria"/>
</dbReference>
<dbReference type="HOGENOM" id="CLU_000445_44_4_6"/>
<dbReference type="InParanoid" id="P45470"/>
<dbReference type="OMA" id="QAFNHLD"/>
<dbReference type="OrthoDB" id="9792284at2"/>
<dbReference type="PhylomeDB" id="P45470"/>
<dbReference type="BioCyc" id="EcoCyc:G7647-MONOMER"/>
<dbReference type="BioCyc" id="MetaCyc:G7647-MONOMER"/>
<dbReference type="BRENDA" id="3.5.1.124">
    <property type="organism ID" value="2026"/>
</dbReference>
<dbReference type="BRENDA" id="4.2.1.130">
    <property type="organism ID" value="2026"/>
</dbReference>
<dbReference type="EvolutionaryTrace" id="P45470"/>
<dbReference type="PRO" id="PR:P45470"/>
<dbReference type="Proteomes" id="UP000000625">
    <property type="component" value="Chromosome"/>
</dbReference>
<dbReference type="GO" id="GO:0005829">
    <property type="term" value="C:cytosol"/>
    <property type="evidence" value="ECO:0000314"/>
    <property type="project" value="EcoCyc"/>
</dbReference>
<dbReference type="GO" id="GO:0019172">
    <property type="term" value="F:glyoxalase III activity"/>
    <property type="evidence" value="ECO:0000314"/>
    <property type="project" value="EcoCyc"/>
</dbReference>
<dbReference type="GO" id="GO:0042802">
    <property type="term" value="F:identical protein binding"/>
    <property type="evidence" value="ECO:0000314"/>
    <property type="project" value="EcoCyc"/>
</dbReference>
<dbReference type="GO" id="GO:0036524">
    <property type="term" value="F:protein deglycase activity"/>
    <property type="evidence" value="ECO:0000314"/>
    <property type="project" value="EcoCyc"/>
</dbReference>
<dbReference type="GO" id="GO:0006281">
    <property type="term" value="P:DNA repair"/>
    <property type="evidence" value="ECO:0000315"/>
    <property type="project" value="EcoCyc"/>
</dbReference>
<dbReference type="GO" id="GO:0106044">
    <property type="term" value="P:guanine deglycation"/>
    <property type="evidence" value="ECO:0000314"/>
    <property type="project" value="EcoCyc"/>
</dbReference>
<dbReference type="GO" id="GO:0030091">
    <property type="term" value="P:protein repair"/>
    <property type="evidence" value="ECO:0000314"/>
    <property type="project" value="EcoCyc"/>
</dbReference>
<dbReference type="GO" id="GO:0009408">
    <property type="term" value="P:response to heat"/>
    <property type="evidence" value="ECO:0000315"/>
    <property type="project" value="EcoCyc"/>
</dbReference>
<dbReference type="GO" id="GO:0006979">
    <property type="term" value="P:response to oxidative stress"/>
    <property type="evidence" value="ECO:0000315"/>
    <property type="project" value="EcoCyc"/>
</dbReference>
<dbReference type="GO" id="GO:0009268">
    <property type="term" value="P:response to pH"/>
    <property type="evidence" value="ECO:0000315"/>
    <property type="project" value="EcoCyc"/>
</dbReference>
<dbReference type="GO" id="GO:0009411">
    <property type="term" value="P:response to UV"/>
    <property type="evidence" value="ECO:0000315"/>
    <property type="project" value="EcoCyc"/>
</dbReference>
<dbReference type="CDD" id="cd03134">
    <property type="entry name" value="GATase1_PfpI_like"/>
    <property type="match status" value="1"/>
</dbReference>
<dbReference type="FunFam" id="3.40.50.880:FF:000017">
    <property type="entry name" value="Type 1 glutamine amidotransferase"/>
    <property type="match status" value="1"/>
</dbReference>
<dbReference type="Gene3D" id="3.40.50.880">
    <property type="match status" value="1"/>
</dbReference>
<dbReference type="InterPro" id="IPR006286">
    <property type="entry name" value="C56_PfpI-like"/>
</dbReference>
<dbReference type="InterPro" id="IPR029062">
    <property type="entry name" value="Class_I_gatase-like"/>
</dbReference>
<dbReference type="InterPro" id="IPR002818">
    <property type="entry name" value="DJ-1/PfpI"/>
</dbReference>
<dbReference type="NCBIfam" id="TIGR01382">
    <property type="entry name" value="PfpI"/>
    <property type="match status" value="1"/>
</dbReference>
<dbReference type="PANTHER" id="PTHR42733">
    <property type="entry name" value="DJ-1 PROTEIN"/>
    <property type="match status" value="1"/>
</dbReference>
<dbReference type="PANTHER" id="PTHR42733:SF2">
    <property type="entry name" value="DJ-1_THIJ_PFPI FAMILY PROTEIN"/>
    <property type="match status" value="1"/>
</dbReference>
<dbReference type="Pfam" id="PF01965">
    <property type="entry name" value="DJ-1_PfpI"/>
    <property type="match status" value="1"/>
</dbReference>
<dbReference type="SUPFAM" id="SSF52317">
    <property type="entry name" value="Class I glutamine amidotransferase-like"/>
    <property type="match status" value="1"/>
</dbReference>
<dbReference type="PROSITE" id="PS51276">
    <property type="entry name" value="PEPTIDASE_C56_PFPI"/>
    <property type="match status" value="1"/>
</dbReference>
<name>YHBO_ECOLI</name>
<protein>
    <recommendedName>
        <fullName evidence="12 13">Protein/nucleic acid deglycase 2</fullName>
        <ecNumber evidence="6">3.1.2.-</ecNumber>
        <ecNumber evidence="8">3.5.1.-</ecNumber>
        <ecNumber evidence="6">3.5.1.124</ecNumber>
    </recommendedName>
    <alternativeName>
        <fullName evidence="9">Maillard deglycase</fullName>
    </alternativeName>
</protein>